<name>FABZ_CLOTE</name>
<gene>
    <name evidence="1" type="primary">fabZ</name>
    <name type="ordered locus">CTC_00133</name>
</gene>
<feature type="chain" id="PRO_0000091668" description="3-hydroxyacyl-[acyl-carrier-protein] dehydratase FabZ">
    <location>
        <begin position="1"/>
        <end position="142"/>
    </location>
</feature>
<feature type="active site" evidence="1">
    <location>
        <position position="50"/>
    </location>
</feature>
<organism>
    <name type="scientific">Clostridium tetani (strain Massachusetts / E88)</name>
    <dbReference type="NCBI Taxonomy" id="212717"/>
    <lineage>
        <taxon>Bacteria</taxon>
        <taxon>Bacillati</taxon>
        <taxon>Bacillota</taxon>
        <taxon>Clostridia</taxon>
        <taxon>Eubacteriales</taxon>
        <taxon>Clostridiaceae</taxon>
        <taxon>Clostridium</taxon>
    </lineage>
</organism>
<reference key="1">
    <citation type="journal article" date="2003" name="Proc. Natl. Acad. Sci. U.S.A.">
        <title>The genome sequence of Clostridium tetani, the causative agent of tetanus disease.</title>
        <authorList>
            <person name="Brueggemann H."/>
            <person name="Baeumer S."/>
            <person name="Fricke W.F."/>
            <person name="Wiezer A."/>
            <person name="Liesegang H."/>
            <person name="Decker I."/>
            <person name="Herzberg C."/>
            <person name="Martinez-Arias R."/>
            <person name="Merkl R."/>
            <person name="Henne A."/>
            <person name="Gottschalk G."/>
        </authorList>
    </citation>
    <scope>NUCLEOTIDE SEQUENCE [LARGE SCALE GENOMIC DNA]</scope>
    <source>
        <strain>Massachusetts / E88</strain>
    </source>
</reference>
<dbReference type="EC" id="4.2.1.59" evidence="1"/>
<dbReference type="EMBL" id="AE015927">
    <property type="protein sequence ID" value="AAO34785.1"/>
    <property type="molecule type" value="Genomic_DNA"/>
</dbReference>
<dbReference type="RefSeq" id="WP_011098457.1">
    <property type="nucleotide sequence ID" value="NC_004557.1"/>
</dbReference>
<dbReference type="SMR" id="Q899N7"/>
<dbReference type="STRING" id="212717.CTC_00133"/>
<dbReference type="GeneID" id="24254636"/>
<dbReference type="KEGG" id="ctc:CTC_00133"/>
<dbReference type="HOGENOM" id="CLU_078912_3_0_9"/>
<dbReference type="OrthoDB" id="9772788at2"/>
<dbReference type="Proteomes" id="UP000001412">
    <property type="component" value="Chromosome"/>
</dbReference>
<dbReference type="GO" id="GO:0005737">
    <property type="term" value="C:cytoplasm"/>
    <property type="evidence" value="ECO:0007669"/>
    <property type="project" value="UniProtKB-SubCell"/>
</dbReference>
<dbReference type="GO" id="GO:0016020">
    <property type="term" value="C:membrane"/>
    <property type="evidence" value="ECO:0007669"/>
    <property type="project" value="GOC"/>
</dbReference>
<dbReference type="GO" id="GO:0019171">
    <property type="term" value="F:(3R)-hydroxyacyl-[acyl-carrier-protein] dehydratase activity"/>
    <property type="evidence" value="ECO:0007669"/>
    <property type="project" value="UniProtKB-EC"/>
</dbReference>
<dbReference type="GO" id="GO:0006633">
    <property type="term" value="P:fatty acid biosynthetic process"/>
    <property type="evidence" value="ECO:0007669"/>
    <property type="project" value="UniProtKB-UniRule"/>
</dbReference>
<dbReference type="GO" id="GO:0009245">
    <property type="term" value="P:lipid A biosynthetic process"/>
    <property type="evidence" value="ECO:0007669"/>
    <property type="project" value="UniProtKB-UniRule"/>
</dbReference>
<dbReference type="CDD" id="cd01288">
    <property type="entry name" value="FabZ"/>
    <property type="match status" value="1"/>
</dbReference>
<dbReference type="FunFam" id="3.10.129.10:FF:000001">
    <property type="entry name" value="3-hydroxyacyl-[acyl-carrier-protein] dehydratase FabZ"/>
    <property type="match status" value="1"/>
</dbReference>
<dbReference type="Gene3D" id="3.10.129.10">
    <property type="entry name" value="Hotdog Thioesterase"/>
    <property type="match status" value="1"/>
</dbReference>
<dbReference type="HAMAP" id="MF_00406">
    <property type="entry name" value="FabZ"/>
    <property type="match status" value="1"/>
</dbReference>
<dbReference type="InterPro" id="IPR013114">
    <property type="entry name" value="FabA_FabZ"/>
</dbReference>
<dbReference type="InterPro" id="IPR010084">
    <property type="entry name" value="FabZ"/>
</dbReference>
<dbReference type="InterPro" id="IPR029069">
    <property type="entry name" value="HotDog_dom_sf"/>
</dbReference>
<dbReference type="NCBIfam" id="TIGR01750">
    <property type="entry name" value="fabZ"/>
    <property type="match status" value="1"/>
</dbReference>
<dbReference type="NCBIfam" id="NF000582">
    <property type="entry name" value="PRK00006.1"/>
    <property type="match status" value="1"/>
</dbReference>
<dbReference type="PANTHER" id="PTHR30272">
    <property type="entry name" value="3-HYDROXYACYL-[ACYL-CARRIER-PROTEIN] DEHYDRATASE"/>
    <property type="match status" value="1"/>
</dbReference>
<dbReference type="PANTHER" id="PTHR30272:SF1">
    <property type="entry name" value="3-HYDROXYACYL-[ACYL-CARRIER-PROTEIN] DEHYDRATASE"/>
    <property type="match status" value="1"/>
</dbReference>
<dbReference type="Pfam" id="PF07977">
    <property type="entry name" value="FabA"/>
    <property type="match status" value="1"/>
</dbReference>
<dbReference type="SUPFAM" id="SSF54637">
    <property type="entry name" value="Thioesterase/thiol ester dehydrase-isomerase"/>
    <property type="match status" value="1"/>
</dbReference>
<comment type="function">
    <text evidence="1">Involved in unsaturated fatty acids biosynthesis. Catalyzes the dehydration of short chain beta-hydroxyacyl-ACPs and long chain saturated and unsaturated beta-hydroxyacyl-ACPs.</text>
</comment>
<comment type="catalytic activity">
    <reaction evidence="1">
        <text>a (3R)-hydroxyacyl-[ACP] = a (2E)-enoyl-[ACP] + H2O</text>
        <dbReference type="Rhea" id="RHEA:13097"/>
        <dbReference type="Rhea" id="RHEA-COMP:9925"/>
        <dbReference type="Rhea" id="RHEA-COMP:9945"/>
        <dbReference type="ChEBI" id="CHEBI:15377"/>
        <dbReference type="ChEBI" id="CHEBI:78784"/>
        <dbReference type="ChEBI" id="CHEBI:78827"/>
        <dbReference type="EC" id="4.2.1.59"/>
    </reaction>
</comment>
<comment type="subcellular location">
    <subcellularLocation>
        <location evidence="1">Cytoplasm</location>
    </subcellularLocation>
</comment>
<comment type="similarity">
    <text evidence="1">Belongs to the thioester dehydratase family. FabZ subfamily.</text>
</comment>
<protein>
    <recommendedName>
        <fullName evidence="1">3-hydroxyacyl-[acyl-carrier-protein] dehydratase FabZ</fullName>
        <ecNumber evidence="1">4.2.1.59</ecNumber>
    </recommendedName>
    <alternativeName>
        <fullName evidence="1">(3R)-hydroxymyristoyl-[acyl-carrier-protein] dehydratase</fullName>
        <shortName evidence="1">(3R)-hydroxymyristoyl-ACP dehydrase</shortName>
    </alternativeName>
    <alternativeName>
        <fullName evidence="1">Beta-hydroxyacyl-ACP dehydratase</fullName>
    </alternativeName>
</protein>
<keyword id="KW-0963">Cytoplasm</keyword>
<keyword id="KW-0441">Lipid A biosynthesis</keyword>
<keyword id="KW-0444">Lipid biosynthesis</keyword>
<keyword id="KW-0443">Lipid metabolism</keyword>
<keyword id="KW-0456">Lyase</keyword>
<keyword id="KW-1185">Reference proteome</keyword>
<sequence length="142" mass="15706">MENLCIKDILQILPHRYPMLLIDKVETVEPGKKIVAYKNVTFNEGFFRGHFPHEPVMPGVLIIEALAQAGAIAVLSLDEFKGKIPYFAGINKAKFRKKVIPGDTLKLEVEMIKLRGSAGIGKGIAKVNEKVVAEAEIMFMIG</sequence>
<proteinExistence type="inferred from homology"/>
<evidence type="ECO:0000255" key="1">
    <source>
        <dbReference type="HAMAP-Rule" id="MF_00406"/>
    </source>
</evidence>
<accession>Q899N7</accession>